<dbReference type="EC" id="3.4.21.92" evidence="1"/>
<dbReference type="EMBL" id="AP006716">
    <property type="protein sequence ID" value="BAE05430.1"/>
    <property type="molecule type" value="Genomic_DNA"/>
</dbReference>
<dbReference type="RefSeq" id="WP_011276385.1">
    <property type="nucleotide sequence ID" value="NC_007168.1"/>
</dbReference>
<dbReference type="SMR" id="Q4L4J5"/>
<dbReference type="MEROPS" id="S14.001"/>
<dbReference type="KEGG" id="sha:SH2121"/>
<dbReference type="eggNOG" id="COG0740">
    <property type="taxonomic scope" value="Bacteria"/>
</dbReference>
<dbReference type="HOGENOM" id="CLU_058707_3_2_9"/>
<dbReference type="OrthoDB" id="9802800at2"/>
<dbReference type="Proteomes" id="UP000000543">
    <property type="component" value="Chromosome"/>
</dbReference>
<dbReference type="GO" id="GO:0005737">
    <property type="term" value="C:cytoplasm"/>
    <property type="evidence" value="ECO:0007669"/>
    <property type="project" value="UniProtKB-SubCell"/>
</dbReference>
<dbReference type="GO" id="GO:0009368">
    <property type="term" value="C:endopeptidase Clp complex"/>
    <property type="evidence" value="ECO:0007669"/>
    <property type="project" value="TreeGrafter"/>
</dbReference>
<dbReference type="GO" id="GO:0004176">
    <property type="term" value="F:ATP-dependent peptidase activity"/>
    <property type="evidence" value="ECO:0007669"/>
    <property type="project" value="InterPro"/>
</dbReference>
<dbReference type="GO" id="GO:0051117">
    <property type="term" value="F:ATPase binding"/>
    <property type="evidence" value="ECO:0007669"/>
    <property type="project" value="TreeGrafter"/>
</dbReference>
<dbReference type="GO" id="GO:0004252">
    <property type="term" value="F:serine-type endopeptidase activity"/>
    <property type="evidence" value="ECO:0007669"/>
    <property type="project" value="UniProtKB-UniRule"/>
</dbReference>
<dbReference type="GO" id="GO:0006515">
    <property type="term" value="P:protein quality control for misfolded or incompletely synthesized proteins"/>
    <property type="evidence" value="ECO:0007669"/>
    <property type="project" value="TreeGrafter"/>
</dbReference>
<dbReference type="CDD" id="cd07017">
    <property type="entry name" value="S14_ClpP_2"/>
    <property type="match status" value="1"/>
</dbReference>
<dbReference type="FunFam" id="3.90.226.10:FF:000001">
    <property type="entry name" value="ATP-dependent Clp protease proteolytic subunit"/>
    <property type="match status" value="1"/>
</dbReference>
<dbReference type="Gene3D" id="3.90.226.10">
    <property type="entry name" value="2-enoyl-CoA Hydratase, Chain A, domain 1"/>
    <property type="match status" value="1"/>
</dbReference>
<dbReference type="HAMAP" id="MF_00444">
    <property type="entry name" value="ClpP"/>
    <property type="match status" value="1"/>
</dbReference>
<dbReference type="InterPro" id="IPR001907">
    <property type="entry name" value="ClpP"/>
</dbReference>
<dbReference type="InterPro" id="IPR029045">
    <property type="entry name" value="ClpP/crotonase-like_dom_sf"/>
</dbReference>
<dbReference type="InterPro" id="IPR023562">
    <property type="entry name" value="ClpP/TepA"/>
</dbReference>
<dbReference type="InterPro" id="IPR033135">
    <property type="entry name" value="ClpP_His_AS"/>
</dbReference>
<dbReference type="InterPro" id="IPR018215">
    <property type="entry name" value="ClpP_Ser_AS"/>
</dbReference>
<dbReference type="NCBIfam" id="TIGR00493">
    <property type="entry name" value="clpP"/>
    <property type="match status" value="1"/>
</dbReference>
<dbReference type="NCBIfam" id="NF001368">
    <property type="entry name" value="PRK00277.1"/>
    <property type="match status" value="1"/>
</dbReference>
<dbReference type="NCBIfam" id="NF009205">
    <property type="entry name" value="PRK12553.1"/>
    <property type="match status" value="1"/>
</dbReference>
<dbReference type="PANTHER" id="PTHR10381">
    <property type="entry name" value="ATP-DEPENDENT CLP PROTEASE PROTEOLYTIC SUBUNIT"/>
    <property type="match status" value="1"/>
</dbReference>
<dbReference type="PANTHER" id="PTHR10381:SF70">
    <property type="entry name" value="ATP-DEPENDENT CLP PROTEASE PROTEOLYTIC SUBUNIT"/>
    <property type="match status" value="1"/>
</dbReference>
<dbReference type="Pfam" id="PF00574">
    <property type="entry name" value="CLP_protease"/>
    <property type="match status" value="1"/>
</dbReference>
<dbReference type="PRINTS" id="PR00127">
    <property type="entry name" value="CLPPROTEASEP"/>
</dbReference>
<dbReference type="SUPFAM" id="SSF52096">
    <property type="entry name" value="ClpP/crotonase"/>
    <property type="match status" value="1"/>
</dbReference>
<dbReference type="PROSITE" id="PS00382">
    <property type="entry name" value="CLP_PROTEASE_HIS"/>
    <property type="match status" value="1"/>
</dbReference>
<dbReference type="PROSITE" id="PS00381">
    <property type="entry name" value="CLP_PROTEASE_SER"/>
    <property type="match status" value="1"/>
</dbReference>
<evidence type="ECO:0000255" key="1">
    <source>
        <dbReference type="HAMAP-Rule" id="MF_00444"/>
    </source>
</evidence>
<comment type="function">
    <text evidence="1">Cleaves peptides in various proteins in a process that requires ATP hydrolysis. Has a chymotrypsin-like activity. Plays a major role in the degradation of misfolded proteins.</text>
</comment>
<comment type="catalytic activity">
    <reaction evidence="1">
        <text>Hydrolysis of proteins to small peptides in the presence of ATP and magnesium. alpha-casein is the usual test substrate. In the absence of ATP, only oligopeptides shorter than five residues are hydrolyzed (such as succinyl-Leu-Tyr-|-NHMec, and Leu-Tyr-Leu-|-Tyr-Trp, in which cleavage of the -Tyr-|-Leu- and -Tyr-|-Trp bonds also occurs).</text>
        <dbReference type="EC" id="3.4.21.92"/>
    </reaction>
</comment>
<comment type="subunit">
    <text evidence="1">Fourteen ClpP subunits assemble into 2 heptameric rings which stack back to back to give a disk-like structure with a central cavity, resembling the structure of eukaryotic proteasomes.</text>
</comment>
<comment type="subcellular location">
    <subcellularLocation>
        <location evidence="1">Cytoplasm</location>
    </subcellularLocation>
</comment>
<comment type="similarity">
    <text evidence="1">Belongs to the peptidase S14 family.</text>
</comment>
<keyword id="KW-0963">Cytoplasm</keyword>
<keyword id="KW-0378">Hydrolase</keyword>
<keyword id="KW-0645">Protease</keyword>
<keyword id="KW-0720">Serine protease</keyword>
<reference key="1">
    <citation type="journal article" date="2005" name="J. Bacteriol.">
        <title>Whole-genome sequencing of Staphylococcus haemolyticus uncovers the extreme plasticity of its genome and the evolution of human-colonizing staphylococcal species.</title>
        <authorList>
            <person name="Takeuchi F."/>
            <person name="Watanabe S."/>
            <person name="Baba T."/>
            <person name="Yuzawa H."/>
            <person name="Ito T."/>
            <person name="Morimoto Y."/>
            <person name="Kuroda M."/>
            <person name="Cui L."/>
            <person name="Takahashi M."/>
            <person name="Ankai A."/>
            <person name="Baba S."/>
            <person name="Fukui S."/>
            <person name="Lee J.C."/>
            <person name="Hiramatsu K."/>
        </authorList>
    </citation>
    <scope>NUCLEOTIDE SEQUENCE [LARGE SCALE GENOMIC DNA]</scope>
    <source>
        <strain>JCSC1435</strain>
    </source>
</reference>
<accession>Q4L4J5</accession>
<name>CLPP_STAHJ</name>
<protein>
    <recommendedName>
        <fullName evidence="1">ATP-dependent Clp protease proteolytic subunit</fullName>
        <ecNumber evidence="1">3.4.21.92</ecNumber>
    </recommendedName>
    <alternativeName>
        <fullName evidence="1">Endopeptidase Clp</fullName>
    </alternativeName>
</protein>
<organism>
    <name type="scientific">Staphylococcus haemolyticus (strain JCSC1435)</name>
    <dbReference type="NCBI Taxonomy" id="279808"/>
    <lineage>
        <taxon>Bacteria</taxon>
        <taxon>Bacillati</taxon>
        <taxon>Bacillota</taxon>
        <taxon>Bacilli</taxon>
        <taxon>Bacillales</taxon>
        <taxon>Staphylococcaceae</taxon>
        <taxon>Staphylococcus</taxon>
    </lineage>
</organism>
<gene>
    <name evidence="1" type="primary">clpP</name>
    <name type="ordered locus">SH2121</name>
</gene>
<proteinExistence type="inferred from homology"/>
<feature type="chain" id="PRO_0000226471" description="ATP-dependent Clp protease proteolytic subunit">
    <location>
        <begin position="1"/>
        <end position="195"/>
    </location>
</feature>
<feature type="active site" description="Nucleophile" evidence="1">
    <location>
        <position position="98"/>
    </location>
</feature>
<feature type="active site" evidence="1">
    <location>
        <position position="123"/>
    </location>
</feature>
<sequence>MNLIPTVIETTNRGERAYDIYSRLLKDRIIMLGSAIDDNVANSIVSQLLFLQAQDSEKDIYLYINSPGGSVTAGFAIYDTIQHIKPDVQTICIGMAASMGSFLLAAGAKGKRFALPNAEVMIHQPLGGAQGQATEIEIAANHILKTREKLNKILAERTGQSIEKIQKDTDRDNFLTADEAKEYGLIDNVMQPEDK</sequence>